<reference key="1">
    <citation type="journal article" date="1992" name="Mol. Biochem. Parasitol.">
        <title>Characterisation of a gene for a cysteine protease from Theileria annulata.</title>
        <authorList>
            <person name="Baylis H.A."/>
            <person name="Megson A."/>
            <person name="Mottram J.C."/>
            <person name="Hall R."/>
        </authorList>
    </citation>
    <scope>NUCLEOTIDE SEQUENCE [MRNA]</scope>
</reference>
<reference key="2">
    <citation type="journal article" date="2005" name="Science">
        <title>Genome of the host-cell transforming parasite Theileria annulata compared with T. parva.</title>
        <authorList>
            <person name="Pain A."/>
            <person name="Renauld H."/>
            <person name="Berriman M."/>
            <person name="Murphy L."/>
            <person name="Yeats C.A."/>
            <person name="Weir W."/>
            <person name="Kerhornou A."/>
            <person name="Aslett M."/>
            <person name="Bishop R."/>
            <person name="Bouchier C."/>
            <person name="Cochet M."/>
            <person name="Coulson R.M.R."/>
            <person name="Cronin A."/>
            <person name="de Villiers E.P."/>
            <person name="Fraser A."/>
            <person name="Fosker N."/>
            <person name="Gardner M."/>
            <person name="Goble A."/>
            <person name="Griffiths-Jones S."/>
            <person name="Harris D.E."/>
            <person name="Katzer F."/>
            <person name="Larke N."/>
            <person name="Lord A."/>
            <person name="Maser P."/>
            <person name="McKellar S."/>
            <person name="Mooney P."/>
            <person name="Morton F."/>
            <person name="Nene V."/>
            <person name="O'Neil S."/>
            <person name="Price C."/>
            <person name="Quail M.A."/>
            <person name="Rabbinowitsch E."/>
            <person name="Rawlings N.D."/>
            <person name="Rutter S."/>
            <person name="Saunders D."/>
            <person name="Seeger K."/>
            <person name="Shah T."/>
            <person name="Squares R."/>
            <person name="Squares S."/>
            <person name="Tivey A."/>
            <person name="Walker A.R."/>
            <person name="Woodward J."/>
            <person name="Dobbelaere D.A.E."/>
            <person name="Langsley G."/>
            <person name="Rajandream M.A."/>
            <person name="McKeever D."/>
            <person name="Shiels B."/>
            <person name="Tait A."/>
            <person name="Barrell B.G."/>
            <person name="Hall N."/>
        </authorList>
    </citation>
    <scope>NUCLEOTIDE SEQUENCE [LARGE SCALE GENOMIC DNA]</scope>
    <source>
        <strain>Ankara</strain>
    </source>
</reference>
<feature type="signal peptide" evidence="2">
    <location>
        <begin position="1"/>
        <end status="unknown"/>
    </location>
</feature>
<feature type="propeptide" id="PRO_0000026388" description="Activation peptide">
    <location>
        <begin status="unknown"/>
        <end position="227"/>
    </location>
</feature>
<feature type="chain" id="PRO_0000026389" description="Cysteine proteinase">
    <location>
        <begin position="228"/>
        <end position="441"/>
    </location>
</feature>
<feature type="active site" evidence="1">
    <location>
        <position position="252"/>
    </location>
</feature>
<feature type="active site" evidence="1">
    <location>
        <position position="381"/>
    </location>
</feature>
<feature type="active site" evidence="1">
    <location>
        <position position="403"/>
    </location>
</feature>
<feature type="glycosylation site" description="N-linked (GlcNAc...) asparagine" evidence="2">
    <location>
        <position position="270"/>
    </location>
</feature>
<feature type="glycosylation site" description="N-linked (GlcNAc...) asparagine" evidence="2">
    <location>
        <position position="345"/>
    </location>
</feature>
<feature type="disulfide bond" evidence="1">
    <location>
        <begin position="249"/>
        <end position="290"/>
    </location>
</feature>
<feature type="sequence conflict" description="In Ref. 1; AAA30135." evidence="5" ref="1">
    <original>I</original>
    <variation>T</variation>
    <location>
        <position position="242"/>
    </location>
</feature>
<keyword id="KW-1015">Disulfide bond</keyword>
<keyword id="KW-0325">Glycoprotein</keyword>
<keyword id="KW-0378">Hydrolase</keyword>
<keyword id="KW-0645">Protease</keyword>
<keyword id="KW-1185">Reference proteome</keyword>
<keyword id="KW-0732">Signal</keyword>
<keyword id="KW-0788">Thiol protease</keyword>
<keyword id="KW-0865">Zymogen</keyword>
<name>CYSP_THEAN</name>
<protein>
    <recommendedName>
        <fullName>Cysteine proteinase</fullName>
        <ecNumber>3.4.22.-</ecNumber>
    </recommendedName>
</protein>
<organism>
    <name type="scientific">Theileria annulata</name>
    <dbReference type="NCBI Taxonomy" id="5874"/>
    <lineage>
        <taxon>Eukaryota</taxon>
        <taxon>Sar</taxon>
        <taxon>Alveolata</taxon>
        <taxon>Apicomplexa</taxon>
        <taxon>Aconoidasida</taxon>
        <taxon>Piroplasmida</taxon>
        <taxon>Theileriidae</taxon>
        <taxon>Theileria</taxon>
    </lineage>
</organism>
<comment type="similarity">
    <text evidence="3 4">Belongs to the peptidase C1 family.</text>
</comment>
<dbReference type="EC" id="3.4.22.-"/>
<dbReference type="EMBL" id="M86659">
    <property type="protein sequence ID" value="AAA30135.1"/>
    <property type="molecule type" value="mRNA"/>
</dbReference>
<dbReference type="EMBL" id="CR940352">
    <property type="protein sequence ID" value="CAI75498.1"/>
    <property type="molecule type" value="Genomic_DNA"/>
</dbReference>
<dbReference type="PIR" id="A45565">
    <property type="entry name" value="A45565"/>
</dbReference>
<dbReference type="RefSeq" id="XP_954974.1">
    <property type="nucleotide sequence ID" value="XM_949881.1"/>
</dbReference>
<dbReference type="SMR" id="P25781"/>
<dbReference type="STRING" id="5874.P25781"/>
<dbReference type="GlyCosmos" id="P25781">
    <property type="glycosylation" value="2 sites, No reported glycans"/>
</dbReference>
<dbReference type="GeneID" id="3864605"/>
<dbReference type="KEGG" id="tan:TA03740"/>
<dbReference type="VEuPathDB" id="PiroplasmaDB:TA03740"/>
<dbReference type="eggNOG" id="KOG1543">
    <property type="taxonomic scope" value="Eukaryota"/>
</dbReference>
<dbReference type="InParanoid" id="P25781"/>
<dbReference type="OMA" id="ATHLHHY"/>
<dbReference type="OrthoDB" id="190265at2759"/>
<dbReference type="Proteomes" id="UP000001950">
    <property type="component" value="Chromosome 3"/>
</dbReference>
<dbReference type="GO" id="GO:0008234">
    <property type="term" value="F:cysteine-type peptidase activity"/>
    <property type="evidence" value="ECO:0007669"/>
    <property type="project" value="UniProtKB-KW"/>
</dbReference>
<dbReference type="GO" id="GO:0006508">
    <property type="term" value="P:proteolysis"/>
    <property type="evidence" value="ECO:0007669"/>
    <property type="project" value="UniProtKB-KW"/>
</dbReference>
<dbReference type="CDD" id="cd02248">
    <property type="entry name" value="Peptidase_C1A"/>
    <property type="match status" value="1"/>
</dbReference>
<dbReference type="Gene3D" id="3.90.70.10">
    <property type="entry name" value="Cysteine proteinases"/>
    <property type="match status" value="1"/>
</dbReference>
<dbReference type="InterPro" id="IPR038765">
    <property type="entry name" value="Papain-like_cys_pep_sf"/>
</dbReference>
<dbReference type="InterPro" id="IPR025661">
    <property type="entry name" value="Pept_asp_AS"/>
</dbReference>
<dbReference type="InterPro" id="IPR025660">
    <property type="entry name" value="Pept_his_AS"/>
</dbReference>
<dbReference type="InterPro" id="IPR013128">
    <property type="entry name" value="Peptidase_C1A"/>
</dbReference>
<dbReference type="InterPro" id="IPR000668">
    <property type="entry name" value="Peptidase_C1A_C"/>
</dbReference>
<dbReference type="InterPro" id="IPR039417">
    <property type="entry name" value="Peptidase_C1A_papain-like"/>
</dbReference>
<dbReference type="InterPro" id="IPR013201">
    <property type="entry name" value="Prot_inhib_I29"/>
</dbReference>
<dbReference type="PANTHER" id="PTHR12411">
    <property type="entry name" value="CYSTEINE PROTEASE FAMILY C1-RELATED"/>
    <property type="match status" value="1"/>
</dbReference>
<dbReference type="Pfam" id="PF08246">
    <property type="entry name" value="Inhibitor_I29"/>
    <property type="match status" value="1"/>
</dbReference>
<dbReference type="Pfam" id="PF00112">
    <property type="entry name" value="Peptidase_C1"/>
    <property type="match status" value="1"/>
</dbReference>
<dbReference type="PRINTS" id="PR00705">
    <property type="entry name" value="PAPAIN"/>
</dbReference>
<dbReference type="SMART" id="SM00848">
    <property type="entry name" value="Inhibitor_I29"/>
    <property type="match status" value="1"/>
</dbReference>
<dbReference type="SMART" id="SM00645">
    <property type="entry name" value="Pept_C1"/>
    <property type="match status" value="1"/>
</dbReference>
<dbReference type="SUPFAM" id="SSF54001">
    <property type="entry name" value="Cysteine proteinases"/>
    <property type="match status" value="1"/>
</dbReference>
<dbReference type="PROSITE" id="PS00640">
    <property type="entry name" value="THIOL_PROTEASE_ASN"/>
    <property type="match status" value="1"/>
</dbReference>
<dbReference type="PROSITE" id="PS00639">
    <property type="entry name" value="THIOL_PROTEASE_HIS"/>
    <property type="match status" value="1"/>
</dbReference>
<gene>
    <name type="primary">TACP</name>
    <name type="ORF">TA03740</name>
</gene>
<sequence>MTVLDDHFPQGDDETVVPTSSSIPILSQMRQIVIKKRLLISFLLTFFILALSSASILTYFFFRSKSITNFKSLAIEHIESHYPSMDPSKRAGFVEEIVKIRQTGKITSDAESELDMLIEFDAFVEKYKKVHRSFDQRVQRFLTFRKNYHIVKTHKPTEPYSLDLNKFSDLSDEEFKALYPVITPPKTYTSLSKHLEFKKMSHKNPIYISKLKKAKGIEEIKDLSLITGENLNWARTDAVSPIKDQGDHCGSCWAFSSIASVESLYRLYKNKSYFLSEQELVNCDKSSMGCAGGLPITALEYIHSKGVSFESEVPYTGIVSPCKPSIKNKVFIDSISILKGNDVVNKSLVISPTVVGIAVTKELKLYSGGIFTGKCGGELNHAVLLVGEGVDHETGMRYWIIKNSWGEDWGENGFLRLQRTKKGLDKCGILTFGLNPILYSS</sequence>
<proteinExistence type="evidence at transcript level"/>
<accession>P25781</accession>
<accession>Q4UCF3</accession>
<evidence type="ECO:0000250" key="1"/>
<evidence type="ECO:0000255" key="2"/>
<evidence type="ECO:0000255" key="3">
    <source>
        <dbReference type="PROSITE-ProRule" id="PRU10089"/>
    </source>
</evidence>
<evidence type="ECO:0000255" key="4">
    <source>
        <dbReference type="PROSITE-ProRule" id="PRU10090"/>
    </source>
</evidence>
<evidence type="ECO:0000305" key="5"/>